<organism>
    <name type="scientific">Autographa californica nuclear polyhedrosis virus</name>
    <name type="common">AcMNPV</name>
    <dbReference type="NCBI Taxonomy" id="46015"/>
    <lineage>
        <taxon>Viruses</taxon>
        <taxon>Viruses incertae sedis</taxon>
        <taxon>Naldaviricetes</taxon>
        <taxon>Lefavirales</taxon>
        <taxon>Baculoviridae</taxon>
        <taxon>Alphabaculovirus</taxon>
        <taxon>Alphabaculovirus aucalifornicae</taxon>
    </lineage>
</organism>
<accession>P41706</accession>
<reference key="1">
    <citation type="journal article" date="1994" name="Virology">
        <title>The complete DNA sequence of Autographa californica nuclear polyhedrosis virus.</title>
        <authorList>
            <person name="Ayres M.D."/>
            <person name="Howard S.C."/>
            <person name="Kuzio J."/>
            <person name="Lopez-Ferber M."/>
            <person name="Possee R.D."/>
        </authorList>
    </citation>
    <scope>NUCLEOTIDE SEQUENCE [LARGE SCALE GENOMIC DNA]</scope>
    <source>
        <strain>C6</strain>
    </source>
</reference>
<protein>
    <recommendedName>
        <fullName>Uncharacterized 12.4 kDa protein in IE1-IEN intergenic region</fullName>
    </recommendedName>
</protein>
<feature type="chain" id="PRO_0000133073" description="Uncharacterized 12.4 kDa protein in IE1-IEN intergenic region">
    <location>
        <begin position="1"/>
        <end position="107"/>
    </location>
</feature>
<keyword id="KW-1185">Reference proteome</keyword>
<organismHost>
    <name type="scientific">Lepidoptera</name>
    <name type="common">butterflies and moths</name>
    <dbReference type="NCBI Taxonomy" id="7088"/>
</organismHost>
<dbReference type="EMBL" id="L22858">
    <property type="protein sequence ID" value="AAA66779.1"/>
    <property type="molecule type" value="Genomic_DNA"/>
</dbReference>
<dbReference type="PIR" id="G72868">
    <property type="entry name" value="G72868"/>
</dbReference>
<dbReference type="RefSeq" id="NP_054180.1">
    <property type="nucleotide sequence ID" value="NC_001623.1"/>
</dbReference>
<dbReference type="GeneID" id="1403982"/>
<dbReference type="KEGG" id="vg:1403982"/>
<dbReference type="OrthoDB" id="29317at10239"/>
<dbReference type="Proteomes" id="UP000008292">
    <property type="component" value="Segment"/>
</dbReference>
<dbReference type="InterPro" id="IPR035132">
    <property type="entry name" value="DUF5501"/>
</dbReference>
<dbReference type="Pfam" id="PF17605">
    <property type="entry name" value="DUF5501"/>
    <property type="match status" value="1"/>
</dbReference>
<proteinExistence type="predicted"/>
<sequence length="107" mass="12419">MNIIINMLGFNIFIETVYKFSDHTMERYHPYQRAPWSASIFKKNYNNVKVASYVEIPYTTNNADVEITYTTNAPSRPESKARRRLDFTNMTPLPCCIDDGSFAKPLL</sequence>
<name>Y149_NPVAC</name>